<protein>
    <recommendedName>
        <fullName evidence="1">Ribosomal protein L11 methyltransferase</fullName>
        <shortName evidence="1">L11 Mtase</shortName>
        <ecNumber evidence="1">2.1.1.-</ecNumber>
    </recommendedName>
</protein>
<keyword id="KW-0963">Cytoplasm</keyword>
<keyword id="KW-0489">Methyltransferase</keyword>
<keyword id="KW-1185">Reference proteome</keyword>
<keyword id="KW-0949">S-adenosyl-L-methionine</keyword>
<keyword id="KW-0808">Transferase</keyword>
<feature type="chain" id="PRO_0000192283" description="Ribosomal protein L11 methyltransferase">
    <location>
        <begin position="1"/>
        <end position="313"/>
    </location>
</feature>
<feature type="binding site" evidence="1">
    <location>
        <position position="151"/>
    </location>
    <ligand>
        <name>S-adenosyl-L-methionine</name>
        <dbReference type="ChEBI" id="CHEBI:59789"/>
    </ligand>
</feature>
<feature type="binding site" evidence="1">
    <location>
        <position position="172"/>
    </location>
    <ligand>
        <name>S-adenosyl-L-methionine</name>
        <dbReference type="ChEBI" id="CHEBI:59789"/>
    </ligand>
</feature>
<feature type="binding site" evidence="1">
    <location>
        <position position="194"/>
    </location>
    <ligand>
        <name>S-adenosyl-L-methionine</name>
        <dbReference type="ChEBI" id="CHEBI:59789"/>
    </ligand>
</feature>
<feature type="binding site" evidence="1">
    <location>
        <position position="245"/>
    </location>
    <ligand>
        <name>S-adenosyl-L-methionine</name>
        <dbReference type="ChEBI" id="CHEBI:59789"/>
    </ligand>
</feature>
<organism>
    <name type="scientific">Nitrosomonas europaea (strain ATCC 19718 / CIP 103999 / KCTC 2705 / NBRC 14298)</name>
    <dbReference type="NCBI Taxonomy" id="228410"/>
    <lineage>
        <taxon>Bacteria</taxon>
        <taxon>Pseudomonadati</taxon>
        <taxon>Pseudomonadota</taxon>
        <taxon>Betaproteobacteria</taxon>
        <taxon>Nitrosomonadales</taxon>
        <taxon>Nitrosomonadaceae</taxon>
        <taxon>Nitrosomonas</taxon>
    </lineage>
</organism>
<comment type="function">
    <text evidence="1">Methylates ribosomal protein L11.</text>
</comment>
<comment type="catalytic activity">
    <reaction evidence="1">
        <text>L-lysyl-[protein] + 3 S-adenosyl-L-methionine = N(6),N(6),N(6)-trimethyl-L-lysyl-[protein] + 3 S-adenosyl-L-homocysteine + 3 H(+)</text>
        <dbReference type="Rhea" id="RHEA:54192"/>
        <dbReference type="Rhea" id="RHEA-COMP:9752"/>
        <dbReference type="Rhea" id="RHEA-COMP:13826"/>
        <dbReference type="ChEBI" id="CHEBI:15378"/>
        <dbReference type="ChEBI" id="CHEBI:29969"/>
        <dbReference type="ChEBI" id="CHEBI:57856"/>
        <dbReference type="ChEBI" id="CHEBI:59789"/>
        <dbReference type="ChEBI" id="CHEBI:61961"/>
    </reaction>
</comment>
<comment type="subcellular location">
    <subcellularLocation>
        <location evidence="1">Cytoplasm</location>
    </subcellularLocation>
</comment>
<comment type="similarity">
    <text evidence="1">Belongs to the methyltransferase superfamily. PrmA family.</text>
</comment>
<accession>Q81ZZ9</accession>
<name>PRMA_NITEU</name>
<gene>
    <name evidence="1" type="primary">prmA</name>
    <name type="ordered locus">NE0654</name>
</gene>
<dbReference type="EC" id="2.1.1.-" evidence="1"/>
<dbReference type="EMBL" id="AL954747">
    <property type="protein sequence ID" value="CAD84565.1"/>
    <property type="molecule type" value="Genomic_DNA"/>
</dbReference>
<dbReference type="RefSeq" id="WP_011111277.1">
    <property type="nucleotide sequence ID" value="NC_004757.1"/>
</dbReference>
<dbReference type="SMR" id="Q81ZZ9"/>
<dbReference type="STRING" id="228410.NE0654"/>
<dbReference type="GeneID" id="87103851"/>
<dbReference type="KEGG" id="neu:NE0654"/>
<dbReference type="eggNOG" id="COG2264">
    <property type="taxonomic scope" value="Bacteria"/>
</dbReference>
<dbReference type="HOGENOM" id="CLU_049382_4_1_4"/>
<dbReference type="OrthoDB" id="9785995at2"/>
<dbReference type="PhylomeDB" id="Q81ZZ9"/>
<dbReference type="Proteomes" id="UP000001416">
    <property type="component" value="Chromosome"/>
</dbReference>
<dbReference type="GO" id="GO:0005829">
    <property type="term" value="C:cytosol"/>
    <property type="evidence" value="ECO:0007669"/>
    <property type="project" value="TreeGrafter"/>
</dbReference>
<dbReference type="GO" id="GO:0016279">
    <property type="term" value="F:protein-lysine N-methyltransferase activity"/>
    <property type="evidence" value="ECO:0007669"/>
    <property type="project" value="TreeGrafter"/>
</dbReference>
<dbReference type="GO" id="GO:0032259">
    <property type="term" value="P:methylation"/>
    <property type="evidence" value="ECO:0007669"/>
    <property type="project" value="UniProtKB-KW"/>
</dbReference>
<dbReference type="CDD" id="cd02440">
    <property type="entry name" value="AdoMet_MTases"/>
    <property type="match status" value="1"/>
</dbReference>
<dbReference type="Gene3D" id="3.40.50.150">
    <property type="entry name" value="Vaccinia Virus protein VP39"/>
    <property type="match status" value="1"/>
</dbReference>
<dbReference type="HAMAP" id="MF_00735">
    <property type="entry name" value="Methyltr_PrmA"/>
    <property type="match status" value="1"/>
</dbReference>
<dbReference type="InterPro" id="IPR050078">
    <property type="entry name" value="Ribosomal_L11_MeTrfase_PrmA"/>
</dbReference>
<dbReference type="InterPro" id="IPR004498">
    <property type="entry name" value="Ribosomal_PrmA_MeTrfase"/>
</dbReference>
<dbReference type="InterPro" id="IPR029063">
    <property type="entry name" value="SAM-dependent_MTases_sf"/>
</dbReference>
<dbReference type="NCBIfam" id="TIGR00406">
    <property type="entry name" value="prmA"/>
    <property type="match status" value="1"/>
</dbReference>
<dbReference type="PANTHER" id="PTHR43648">
    <property type="entry name" value="ELECTRON TRANSFER FLAVOPROTEIN BETA SUBUNIT LYSINE METHYLTRANSFERASE"/>
    <property type="match status" value="1"/>
</dbReference>
<dbReference type="PANTHER" id="PTHR43648:SF1">
    <property type="entry name" value="ELECTRON TRANSFER FLAVOPROTEIN BETA SUBUNIT LYSINE METHYLTRANSFERASE"/>
    <property type="match status" value="1"/>
</dbReference>
<dbReference type="Pfam" id="PF06325">
    <property type="entry name" value="PrmA"/>
    <property type="match status" value="1"/>
</dbReference>
<dbReference type="PIRSF" id="PIRSF000401">
    <property type="entry name" value="RPL11_MTase"/>
    <property type="match status" value="1"/>
</dbReference>
<dbReference type="SUPFAM" id="SSF53335">
    <property type="entry name" value="S-adenosyl-L-methionine-dependent methyltransferases"/>
    <property type="match status" value="1"/>
</dbReference>
<proteinExistence type="inferred from homology"/>
<reference key="1">
    <citation type="journal article" date="2003" name="J. Bacteriol.">
        <title>Complete genome sequence of the ammonia-oxidizing bacterium and obligate chemolithoautotroph Nitrosomonas europaea.</title>
        <authorList>
            <person name="Chain P."/>
            <person name="Lamerdin J.E."/>
            <person name="Larimer F.W."/>
            <person name="Regala W."/>
            <person name="Lao V."/>
            <person name="Land M.L."/>
            <person name="Hauser L."/>
            <person name="Hooper A.B."/>
            <person name="Klotz M.G."/>
            <person name="Norton J."/>
            <person name="Sayavedra-Soto L.A."/>
            <person name="Arciero D.M."/>
            <person name="Hommes N.G."/>
            <person name="Whittaker M.M."/>
            <person name="Arp D.J."/>
        </authorList>
    </citation>
    <scope>NUCLEOTIDE SEQUENCE [LARGE SCALE GENOMIC DNA]</scope>
    <source>
        <strain>ATCC 19718 / CIP 103999 / KCTC 2705 / NBRC 14298</strain>
    </source>
</reference>
<sequence length="313" mass="34038">MSWLSLTFRIGSDYVDLVGDRLLERGALSVDVHDAGEGTSQEQPLFGEPGAPLDQFWQQAEVTVLLEENANIDEIIQGVAEVIGLPALPEYQLAQVMEQDWVRLTQAQFEPIRISSRLWVVPSWHEPPDPAAISLRLDPGLAFGTGSHPTTRLCLTWLDQFLQPGDSVLDYGCGSGILAIAALKFGADRVTGMDIDPNAITASLDNARNNFCDPDRLLFTTVLPPLVEDDRASAEWAPVTIVVANILANPLIMLAPVLMKALQPGGRIVLSGILETQADEVLQVYSEWFDMHIAAKEQGWVLLAGQKSGGGFA</sequence>
<evidence type="ECO:0000255" key="1">
    <source>
        <dbReference type="HAMAP-Rule" id="MF_00735"/>
    </source>
</evidence>